<sequence>MAEGGSLRNRTRFGSRSNEAMNHVDYPDENFVEEIQLNSDTEVMEKPRPIQIVLAHEDDHNFELDETALESILMQDHIRDLNVVVLSVAGAFRKGKSFLLDFMLRFMYSQSSSWIGGNYEPLTGFTWRGGCERETTGIQIWSEVFVVEKPDGSKVAVILMDTQGAFDSQSTIKDCATVFALSTMTSSVQVYNLSQNIQEDDLQHLQLFTEYGRLAMEEIYKKPFQTLMFLIRDWSYPYEHSYGLEGGNKFLEKRLQVKQNQHEELQNVRKHIHSCFTNIGCFLLPHPGLKVATNPYFDGRLVEIDDEFKKELRELVPLLLAPENLVEKEISGSKVTCRDLLEYFKAYIKIYQGEELPHPKSMLQATAEANNMAAVAGAKDTYSRSMEQVCGGDKPYIAPSDLERKHLDLKETCIKQFRSVKKMGGEEFCRRYQEQLEAEIEETYANFLKHNDGKNIFYAARTPATLFAVMFAMYIISGLTGFIGMNSIATICNLIMGLTLLSFCTWAYVKYSGEFRELGTLIDQIAEIIWEQLLKPLSDNLMEDNIRQTVRNSIKAGLTDQVSGRLKTN</sequence>
<keyword id="KW-0175">Coiled coil</keyword>
<keyword id="KW-0256">Endoplasmic reticulum</keyword>
<keyword id="KW-0342">GTP-binding</keyword>
<keyword id="KW-0378">Hydrolase</keyword>
<keyword id="KW-0460">Magnesium</keyword>
<keyword id="KW-0472">Membrane</keyword>
<keyword id="KW-0479">Metal-binding</keyword>
<keyword id="KW-0547">Nucleotide-binding</keyword>
<keyword id="KW-1185">Reference proteome</keyword>
<keyword id="KW-0812">Transmembrane</keyword>
<keyword id="KW-1133">Transmembrane helix</keyword>
<gene>
    <name type="primary">atl2</name>
    <name type="synonym">arl6ip2</name>
</gene>
<feature type="chain" id="PRO_0000287108" description="Atlastin-2">
    <location>
        <begin position="1"/>
        <end position="569"/>
    </location>
</feature>
<feature type="topological domain" description="Cytoplasmic" evidence="1">
    <location>
        <begin position="1"/>
        <end position="464"/>
    </location>
</feature>
<feature type="transmembrane region" description="Helical" evidence="3">
    <location>
        <begin position="465"/>
        <end position="485"/>
    </location>
</feature>
<feature type="topological domain" description="Lumenal" evidence="1">
    <location>
        <begin position="486"/>
        <end position="487"/>
    </location>
</feature>
<feature type="transmembrane region" description="Helical" evidence="3">
    <location>
        <begin position="488"/>
        <end position="508"/>
    </location>
</feature>
<feature type="topological domain" description="Cytoplasmic" evidence="1">
    <location>
        <begin position="509"/>
        <end position="569"/>
    </location>
</feature>
<feature type="domain" description="GB1/RHD3-type G" evidence="4">
    <location>
        <begin position="80"/>
        <end position="324"/>
    </location>
</feature>
<feature type="region of interest" description="N-terminal hypervariable region (HVR)" evidence="2">
    <location>
        <begin position="1"/>
        <end position="49"/>
    </location>
</feature>
<feature type="region of interest" description="3HB (three-helix bundle) domain" evidence="2">
    <location>
        <begin position="362"/>
        <end position="453"/>
    </location>
</feature>
<feature type="region of interest" description="Linker" evidence="2">
    <location>
        <begin position="454"/>
        <end position="462"/>
    </location>
</feature>
<feature type="region of interest" description="Autoinhibitory domain" evidence="1">
    <location>
        <begin position="535"/>
        <end position="569"/>
    </location>
</feature>
<feature type="coiled-coil region" evidence="3">
    <location>
        <begin position="244"/>
        <end position="272"/>
    </location>
</feature>
<feature type="binding site" evidence="2">
    <location>
        <position position="93"/>
    </location>
    <ligand>
        <name>GDP</name>
        <dbReference type="ChEBI" id="CHEBI:58189"/>
    </ligand>
</feature>
<feature type="binding site" evidence="2">
    <location>
        <position position="93"/>
    </location>
    <ligand>
        <name>GTP</name>
        <dbReference type="ChEBI" id="CHEBI:37565"/>
    </ligand>
</feature>
<feature type="binding site" evidence="2">
    <location>
        <position position="94"/>
    </location>
    <ligand>
        <name>GDP</name>
        <dbReference type="ChEBI" id="CHEBI:58189"/>
    </ligand>
</feature>
<feature type="binding site" evidence="2">
    <location>
        <position position="94"/>
    </location>
    <ligand>
        <name>GTP</name>
        <dbReference type="ChEBI" id="CHEBI:37565"/>
    </ligand>
</feature>
<feature type="binding site" evidence="2">
    <location>
        <position position="95"/>
    </location>
    <ligand>
        <name>GDP</name>
        <dbReference type="ChEBI" id="CHEBI:58189"/>
    </ligand>
</feature>
<feature type="binding site" evidence="2">
    <location>
        <position position="95"/>
    </location>
    <ligand>
        <name>GTP</name>
        <dbReference type="ChEBI" id="CHEBI:37565"/>
    </ligand>
</feature>
<feature type="binding site" evidence="2">
    <location>
        <position position="96"/>
    </location>
    <ligand>
        <name>GDP</name>
        <dbReference type="ChEBI" id="CHEBI:58189"/>
    </ligand>
</feature>
<feature type="binding site" evidence="2">
    <location>
        <position position="96"/>
    </location>
    <ligand>
        <name>GTP</name>
        <dbReference type="ChEBI" id="CHEBI:37565"/>
    </ligand>
</feature>
<feature type="binding site" evidence="2">
    <location>
        <position position="97"/>
    </location>
    <ligand>
        <name>GDP</name>
        <dbReference type="ChEBI" id="CHEBI:58189"/>
    </ligand>
</feature>
<feature type="binding site" evidence="2">
    <location>
        <position position="97"/>
    </location>
    <ligand>
        <name>GTP</name>
        <dbReference type="ChEBI" id="CHEBI:37565"/>
    </ligand>
</feature>
<feature type="binding site" evidence="2">
    <location>
        <position position="97"/>
    </location>
    <ligand>
        <name>Mg(2+)</name>
        <dbReference type="ChEBI" id="CHEBI:18420"/>
    </ligand>
</feature>
<feature type="binding site" evidence="2">
    <location>
        <position position="98"/>
    </location>
    <ligand>
        <name>GDP</name>
        <dbReference type="ChEBI" id="CHEBI:58189"/>
    </ligand>
</feature>
<feature type="binding site" evidence="2">
    <location>
        <position position="98"/>
    </location>
    <ligand>
        <name>GTP</name>
        <dbReference type="ChEBI" id="CHEBI:37565"/>
    </ligand>
</feature>
<feature type="binding site" evidence="2">
    <location>
        <position position="163"/>
    </location>
    <ligand>
        <name>GDP</name>
        <dbReference type="ChEBI" id="CHEBI:58189"/>
    </ligand>
</feature>
<feature type="binding site" evidence="2">
    <location>
        <position position="232"/>
    </location>
    <ligand>
        <name>GDP</name>
        <dbReference type="ChEBI" id="CHEBI:58189"/>
    </ligand>
</feature>
<feature type="binding site" evidence="2">
    <location>
        <position position="232"/>
    </location>
    <ligand>
        <name>GTP</name>
        <dbReference type="ChEBI" id="CHEBI:37565"/>
    </ligand>
</feature>
<feature type="binding site" evidence="2">
    <location>
        <position position="233"/>
    </location>
    <ligand>
        <name>GDP</name>
        <dbReference type="ChEBI" id="CHEBI:58189"/>
    </ligand>
</feature>
<feature type="binding site" evidence="2">
    <location>
        <position position="233"/>
    </location>
    <ligand>
        <name>GTP</name>
        <dbReference type="ChEBI" id="CHEBI:37565"/>
    </ligand>
</feature>
<feature type="binding site" evidence="2">
    <location>
        <position position="291"/>
    </location>
    <ligand>
        <name>GDP</name>
        <dbReference type="ChEBI" id="CHEBI:58189"/>
    </ligand>
</feature>
<feature type="binding site" evidence="2">
    <location>
        <position position="291"/>
    </location>
    <ligand>
        <name>GTP</name>
        <dbReference type="ChEBI" id="CHEBI:37565"/>
    </ligand>
</feature>
<feature type="binding site" evidence="2">
    <location>
        <position position="294"/>
    </location>
    <ligand>
        <name>GDP</name>
        <dbReference type="ChEBI" id="CHEBI:58189"/>
    </ligand>
</feature>
<accession>Q6GN29</accession>
<dbReference type="EC" id="3.6.5.-" evidence="1"/>
<dbReference type="EMBL" id="BC073692">
    <property type="protein sequence ID" value="AAH73692.1"/>
    <property type="molecule type" value="mRNA"/>
</dbReference>
<dbReference type="RefSeq" id="NP_001086007.1">
    <property type="nucleotide sequence ID" value="NM_001092538.1"/>
</dbReference>
<dbReference type="SMR" id="Q6GN29"/>
<dbReference type="DNASU" id="444436"/>
<dbReference type="GeneID" id="444436"/>
<dbReference type="KEGG" id="xla:444436"/>
<dbReference type="AGR" id="Xenbase:XB-GENE-947240"/>
<dbReference type="CTD" id="444436"/>
<dbReference type="Xenbase" id="XB-GENE-947240">
    <property type="gene designation" value="atl2.L"/>
</dbReference>
<dbReference type="OMA" id="GQVMFKR"/>
<dbReference type="OrthoDB" id="7788754at2759"/>
<dbReference type="Proteomes" id="UP000186698">
    <property type="component" value="Chromosome 5L"/>
</dbReference>
<dbReference type="Bgee" id="444436">
    <property type="expression patterns" value="Expressed in blastula and 19 other cell types or tissues"/>
</dbReference>
<dbReference type="GO" id="GO:0098826">
    <property type="term" value="C:endoplasmic reticulum tubular network membrane"/>
    <property type="evidence" value="ECO:0000314"/>
    <property type="project" value="UniProtKB"/>
</dbReference>
<dbReference type="GO" id="GO:0005525">
    <property type="term" value="F:GTP binding"/>
    <property type="evidence" value="ECO:0000318"/>
    <property type="project" value="GO_Central"/>
</dbReference>
<dbReference type="GO" id="GO:0003924">
    <property type="term" value="F:GTPase activity"/>
    <property type="evidence" value="ECO:0000318"/>
    <property type="project" value="GO_Central"/>
</dbReference>
<dbReference type="GO" id="GO:0140523">
    <property type="term" value="F:GTPase-dependent fusogenic activity"/>
    <property type="evidence" value="ECO:0000250"/>
    <property type="project" value="UniProtKB"/>
</dbReference>
<dbReference type="GO" id="GO:0016320">
    <property type="term" value="P:endoplasmic reticulum membrane fusion"/>
    <property type="evidence" value="ECO:0000250"/>
    <property type="project" value="UniProtKB"/>
</dbReference>
<dbReference type="GO" id="GO:0007029">
    <property type="term" value="P:endoplasmic reticulum organization"/>
    <property type="evidence" value="ECO:0000318"/>
    <property type="project" value="GO_Central"/>
</dbReference>
<dbReference type="GO" id="GO:1990809">
    <property type="term" value="P:endoplasmic reticulum tubular network membrane organization"/>
    <property type="evidence" value="ECO:0000315"/>
    <property type="project" value="UniProtKB"/>
</dbReference>
<dbReference type="GO" id="GO:0051260">
    <property type="term" value="P:protein homooligomerization"/>
    <property type="evidence" value="ECO:0000318"/>
    <property type="project" value="GO_Central"/>
</dbReference>
<dbReference type="CDD" id="cd01851">
    <property type="entry name" value="GBP"/>
    <property type="match status" value="1"/>
</dbReference>
<dbReference type="FunFam" id="1.20.58.420:FF:000001">
    <property type="entry name" value="Atlastin-1 isoform 1"/>
    <property type="match status" value="1"/>
</dbReference>
<dbReference type="FunFam" id="3.40.50.300:FF:000314">
    <property type="entry name" value="Atlastin-2 isoform 2"/>
    <property type="match status" value="1"/>
</dbReference>
<dbReference type="Gene3D" id="1.20.58.420">
    <property type="entry name" value="AHSP"/>
    <property type="match status" value="1"/>
</dbReference>
<dbReference type="Gene3D" id="3.40.50.300">
    <property type="entry name" value="P-loop containing nucleotide triphosphate hydrolases"/>
    <property type="match status" value="1"/>
</dbReference>
<dbReference type="InterPro" id="IPR030386">
    <property type="entry name" value="G_GB1_RHD3_dom"/>
</dbReference>
<dbReference type="InterPro" id="IPR003191">
    <property type="entry name" value="Guanylate-bd/ATL_C"/>
</dbReference>
<dbReference type="InterPro" id="IPR036543">
    <property type="entry name" value="Guanylate-bd_C_sf"/>
</dbReference>
<dbReference type="InterPro" id="IPR015894">
    <property type="entry name" value="Guanylate-bd_N"/>
</dbReference>
<dbReference type="InterPro" id="IPR027417">
    <property type="entry name" value="P-loop_NTPase"/>
</dbReference>
<dbReference type="PANTHER" id="PTHR10751">
    <property type="entry name" value="GUANYLATE BINDING PROTEIN"/>
    <property type="match status" value="1"/>
</dbReference>
<dbReference type="Pfam" id="PF02263">
    <property type="entry name" value="GBP"/>
    <property type="match status" value="1"/>
</dbReference>
<dbReference type="Pfam" id="PF02841">
    <property type="entry name" value="GBP_C"/>
    <property type="match status" value="1"/>
</dbReference>
<dbReference type="SUPFAM" id="SSF48340">
    <property type="entry name" value="Interferon-induced guanylate-binding protein 1 (GBP1), C-terminal domain"/>
    <property type="match status" value="1"/>
</dbReference>
<dbReference type="SUPFAM" id="SSF52540">
    <property type="entry name" value="P-loop containing nucleoside triphosphate hydrolases"/>
    <property type="match status" value="1"/>
</dbReference>
<dbReference type="PROSITE" id="PS51715">
    <property type="entry name" value="G_GB1_RHD3"/>
    <property type="match status" value="1"/>
</dbReference>
<organism>
    <name type="scientific">Xenopus laevis</name>
    <name type="common">African clawed frog</name>
    <dbReference type="NCBI Taxonomy" id="8355"/>
    <lineage>
        <taxon>Eukaryota</taxon>
        <taxon>Metazoa</taxon>
        <taxon>Chordata</taxon>
        <taxon>Craniata</taxon>
        <taxon>Vertebrata</taxon>
        <taxon>Euteleostomi</taxon>
        <taxon>Amphibia</taxon>
        <taxon>Batrachia</taxon>
        <taxon>Anura</taxon>
        <taxon>Pipoidea</taxon>
        <taxon>Pipidae</taxon>
        <taxon>Xenopodinae</taxon>
        <taxon>Xenopus</taxon>
        <taxon>Xenopus</taxon>
    </lineage>
</organism>
<reference key="1">
    <citation type="submission" date="2004-06" db="EMBL/GenBank/DDBJ databases">
        <authorList>
            <consortium name="NIH - Xenopus Gene Collection (XGC) project"/>
        </authorList>
    </citation>
    <scope>NUCLEOTIDE SEQUENCE [LARGE SCALE MRNA]</scope>
    <source>
        <tissue>Oocyte</tissue>
    </source>
</reference>
<reference key="2">
    <citation type="journal article" date="2016" name="Elife">
        <title>Cooperation of the ER-shaping proteins atlastin, lunapark, and reticulons to generate a tubular membrane network.</title>
        <authorList>
            <person name="Wang S."/>
            <person name="Tukachinsky H."/>
            <person name="Romano F.B."/>
            <person name="Rapoport T.A."/>
        </authorList>
    </citation>
    <scope>FUNCTION</scope>
    <scope>SUBCELLULAR LOCATION</scope>
</reference>
<proteinExistence type="evidence at transcript level"/>
<name>ATLA2_XENLA</name>
<comment type="function">
    <text evidence="2 5">Atlastin-2 (ATL2) is a membrane-anchored GTPase that mediates the GTP-dependent fusion of endoplasmic reticulum (ER) membranes, maintaining the continuous ER network. It facilitates the formation of three-way junctions where ER tubules intersect (PubMed:27619977). Two atlastin-2 on neighboring ER tubules bind GTP and form loose homodimers through the GB1/RHD3-type G domains and 3HB regions. Upon GTP hydrolysis, the 3HB regions tighten, pulling the membranes together to drive their fusion. After fusion, the homodimer disassembles upon release of inorganic phosphate (Pi). Subsequently, GDP dissociates, resetting the monomers to a conformation ready for a new fusion cycle (By similarity).</text>
</comment>
<comment type="catalytic activity">
    <reaction evidence="1">
        <text>GTP + H2O = GDP + phosphate + H(+)</text>
        <dbReference type="Rhea" id="RHEA:19669"/>
        <dbReference type="ChEBI" id="CHEBI:15377"/>
        <dbReference type="ChEBI" id="CHEBI:15378"/>
        <dbReference type="ChEBI" id="CHEBI:37565"/>
        <dbReference type="ChEBI" id="CHEBI:43474"/>
        <dbReference type="ChEBI" id="CHEBI:58189"/>
    </reaction>
    <physiologicalReaction direction="left-to-right" evidence="1">
        <dbReference type="Rhea" id="RHEA:19670"/>
    </physiologicalReaction>
</comment>
<comment type="subunit">
    <text evidence="1">Monomeric and homodimeric. The homodimer, transiently formed by two molecules on opposing membranes, is the active form mediating ER membrane fusion.</text>
</comment>
<comment type="subcellular location">
    <subcellularLocation>
        <location evidence="5">Endoplasmic reticulum membrane</location>
        <topology evidence="1">Multi-pass membrane protein</topology>
    </subcellularLocation>
    <text evidence="5">Localizes at endoplasmic reticulum (ER) three-way tubular junctions (PubMed:27619977).</text>
</comment>
<comment type="domain">
    <text evidence="2">The GB1/RHD3-type G domain mediates GTP-binding and hydrolysis as well as homodimerization.</text>
</comment>
<comment type="domain">
    <text evidence="2">The two three-helix bundle (3HB) regions in the homodimer are loosely associated initially, but they tighten upon GTP hydrolysis, facilitating the fusion of membranes.</text>
</comment>
<comment type="domain">
    <text evidence="1">The C-terminal autoihibitory domain negatively regulates the GTPase-dependent fusogenic activity without affecting GTP-binding.</text>
</comment>
<comment type="similarity">
    <text evidence="4">Belongs to the TRAFAC class dynamin-like GTPase superfamily. GB1/RHD3 GTPase family. GB1 subfamily.</text>
</comment>
<evidence type="ECO:0000250" key="1">
    <source>
        <dbReference type="UniProtKB" id="Q8NHH9"/>
    </source>
</evidence>
<evidence type="ECO:0000250" key="2">
    <source>
        <dbReference type="UniProtKB" id="Q8WXF7"/>
    </source>
</evidence>
<evidence type="ECO:0000255" key="3"/>
<evidence type="ECO:0000255" key="4">
    <source>
        <dbReference type="PROSITE-ProRule" id="PRU01052"/>
    </source>
</evidence>
<evidence type="ECO:0000269" key="5">
    <source>
    </source>
</evidence>
<evidence type="ECO:0000303" key="6">
    <source>
    </source>
</evidence>
<evidence type="ECO:0000305" key="7">
    <source>
    </source>
</evidence>
<protein>
    <recommendedName>
        <fullName evidence="7">Atlastin-2</fullName>
        <shortName evidence="6">ATL-2</shortName>
        <ecNumber evidence="1">3.6.5.-</ecNumber>
    </recommendedName>
    <alternativeName>
        <fullName>ADP-ribosylation factor-like protein 6-interacting protein 2</fullName>
        <shortName>ARL-6-interacting protein 2</shortName>
        <shortName>Aip-2</shortName>
    </alternativeName>
</protein>